<organism>
    <name type="scientific">Caenorhabditis elegans</name>
    <dbReference type="NCBI Taxonomy" id="6239"/>
    <lineage>
        <taxon>Eukaryota</taxon>
        <taxon>Metazoa</taxon>
        <taxon>Ecdysozoa</taxon>
        <taxon>Nematoda</taxon>
        <taxon>Chromadorea</taxon>
        <taxon>Rhabditida</taxon>
        <taxon>Rhabditina</taxon>
        <taxon>Rhabditomorpha</taxon>
        <taxon>Rhabditoidea</taxon>
        <taxon>Rhabditidae</taxon>
        <taxon>Peloderinae</taxon>
        <taxon>Caenorhabditis</taxon>
    </lineage>
</organism>
<gene>
    <name evidence="11 12" type="primary">nrf-5</name>
    <name type="ORF">F55B12.5</name>
</gene>
<accession>Q93796</accession>
<accession>Q6RV00</accession>
<accession>Q6RV01</accession>
<keyword id="KW-0217">Developmental protein</keyword>
<keyword id="KW-1015">Disulfide bond</keyword>
<keyword id="KW-0445">Lipid transport</keyword>
<keyword id="KW-0446">Lipid-binding</keyword>
<keyword id="KW-1185">Reference proteome</keyword>
<keyword id="KW-0964">Secreted</keyword>
<keyword id="KW-0732">Signal</keyword>
<keyword id="KW-0813">Transport</keyword>
<comment type="function">
    <text evidence="4 6 7 9">Plays a role in the uptake of a range of molecules including phosphatidylserine, lipids and xenobiotic compounds from the intestine to surrounding tissues. Possesses lipid transfer activity. Mediates transport of lipids from intestine to reproductive tract. Binds phosphatidylserine. Plays a role in efficient clearance of cell corpses by mediating phosphatidylserine appearance on phagocytic cells, thus promoting phagocytic engulfment of apoptotic cells. Vital for embryonic development.</text>
</comment>
<comment type="subunit">
    <text evidence="7">Interacts with ttr-52.</text>
</comment>
<comment type="subcellular location">
    <subcellularLocation>
        <location evidence="7">Secreted</location>
    </subcellularLocation>
</comment>
<comment type="tissue specificity">
    <text evidence="5 7">Expressed in the body wall muscle cells and detected at the basal surface of pharyngeal cells and basal-lateral membranes of the intestine.</text>
</comment>
<comment type="disruption phenotype">
    <text evidence="4 5 6 7">Increased resistance to fluoxetine-induced nose muscle contraction. Slow development, embryonic lethality and defect in yolk transport to oocytes leading to accumulation of yolk granules in the pseudocoelomic fluid and appearance of pale eggs. Reduced level of sensitivity to dihomo-gamma-linolenic acid-induced sterility. Cell corpses persist significantly longer than in the wild-type, indicating a cell corpse clearance defect.</text>
</comment>
<comment type="similarity">
    <text evidence="2">Belongs to the BPI/LBP/Plunc superfamily. BPI/LBP family.</text>
</comment>
<reference evidence="11" key="1">
    <citation type="journal article" date="1998" name="Science">
        <title>Genome sequence of the nematode C. elegans: a platform for investigating biology.</title>
        <authorList>
            <consortium name="The C. elegans sequencing consortium"/>
        </authorList>
    </citation>
    <scope>NUCLEOTIDE SEQUENCE [LARGE SCALE GENOMIC DNA]</scope>
    <source>
        <strain evidence="11">Bristol N2</strain>
    </source>
</reference>
<reference evidence="9 10" key="2">
    <citation type="journal article" date="2006" name="Genetics">
        <title>Fluoxetine-resistance genes in Caenorhabditis elegans function in the intestine and may act in drug transport.</title>
        <authorList>
            <person name="Choy R.K."/>
            <person name="Kemner J.M."/>
            <person name="Thomas J.H."/>
        </authorList>
    </citation>
    <scope>NUCLEOTIDE SEQUENCE [MRNA] OF 4-551</scope>
    <scope>TISSUE SPECIFICITY</scope>
    <scope>DISRUPTION PHENOTYPE</scope>
</reference>
<reference evidence="9" key="3">
    <citation type="journal article" date="1999" name="Mol. Cell">
        <title>Fluoxetine-resistant mutants in C. elegans define a novel family of transmembrane proteins.</title>
        <authorList>
            <person name="Choy R.K.M."/>
            <person name="Thomas J.H."/>
        </authorList>
    </citation>
    <scope>FUNCTION</scope>
    <scope>DISRUPTION PHENOTYPE</scope>
    <source>
        <strain evidence="4">Bristol N2</strain>
    </source>
</reference>
<reference evidence="9" key="4">
    <citation type="journal article" date="2006" name="Dev. Biol.">
        <title>Dietary manipulation implicates lipid signaling in the regulation of germ cell maintenance in C. elegans.</title>
        <authorList>
            <person name="Watts J.L."/>
            <person name="Browse J."/>
        </authorList>
    </citation>
    <scope>FUNCTION</scope>
    <scope>DISRUPTION PHENOTYPE</scope>
</reference>
<reference evidence="9" key="5">
    <citation type="journal article" date="2012" name="Curr. Biol.">
        <title>C. elegans secreted lipid-binding protein NRF-5 mediates PS appearance on phagocytes for cell corpse engulfment.</title>
        <authorList>
            <person name="Zhang Y."/>
            <person name="Wang H."/>
            <person name="Kage-Nakadai E."/>
            <person name="Mitani S."/>
            <person name="Wang X."/>
        </authorList>
    </citation>
    <scope>FUNCTION</scope>
    <scope>INTERACTION WITH TTR-52</scope>
    <scope>SUBCELLULAR LOCATION</scope>
    <scope>TISSUE SPECIFICITY</scope>
    <scope>DISRUPTION PHENOTYPE</scope>
</reference>
<protein>
    <recommendedName>
        <fullName evidence="8">Nose resistant to fluoxetine protein 5</fullName>
        <shortName evidence="8">Protein nrf-5</shortName>
    </recommendedName>
</protein>
<proteinExistence type="evidence at protein level"/>
<feature type="signal peptide" evidence="2">
    <location>
        <begin position="1"/>
        <end position="20"/>
    </location>
</feature>
<feature type="chain" id="PRO_0000422699" description="Nose resistant to fluoxetine protein 5" evidence="2">
    <location>
        <begin position="21"/>
        <end position="551"/>
    </location>
</feature>
<feature type="region of interest" description="Disordered" evidence="3">
    <location>
        <begin position="241"/>
        <end position="265"/>
    </location>
</feature>
<feature type="disulfide bond" evidence="1">
    <location>
        <begin position="151"/>
        <end position="232"/>
    </location>
</feature>
<feature type="sequence conflict" description="In Ref. 1; AAS18681/AAS18682." evidence="9" ref="1">
    <original>D</original>
    <variation>DVSCIQEKLILKNFSCINLKVEQKFQ</variation>
    <location>
        <position position="452"/>
    </location>
</feature>
<dbReference type="EMBL" id="Z79757">
    <property type="protein sequence ID" value="CAB02126.2"/>
    <property type="molecule type" value="Genomic_DNA"/>
</dbReference>
<dbReference type="EMBL" id="AY491012">
    <property type="protein sequence ID" value="AAS18681.1"/>
    <property type="molecule type" value="mRNA"/>
</dbReference>
<dbReference type="EMBL" id="AY491013">
    <property type="protein sequence ID" value="AAS18682.1"/>
    <property type="molecule type" value="mRNA"/>
</dbReference>
<dbReference type="PIR" id="T22700">
    <property type="entry name" value="T22700"/>
</dbReference>
<dbReference type="RefSeq" id="NP_506424.2">
    <property type="nucleotide sequence ID" value="NM_074023.5"/>
</dbReference>
<dbReference type="SMR" id="Q93796"/>
<dbReference type="BioGRID" id="44893">
    <property type="interactions" value="2"/>
</dbReference>
<dbReference type="FunCoup" id="Q93796">
    <property type="interactions" value="43"/>
</dbReference>
<dbReference type="STRING" id="6239.F55B12.5.2"/>
<dbReference type="SwissLipids" id="SLP:000000403"/>
<dbReference type="TCDB" id="1.C.40.1.5">
    <property type="family name" value="the bactericidal permeability increasing protein (bpip) family"/>
</dbReference>
<dbReference type="PaxDb" id="6239-F55B12.5.2"/>
<dbReference type="PeptideAtlas" id="Q93796"/>
<dbReference type="EnsemblMetazoa" id="F55B12.5.1">
    <property type="protein sequence ID" value="F55B12.5.1"/>
    <property type="gene ID" value="WBGene00003812"/>
</dbReference>
<dbReference type="GeneID" id="179879"/>
<dbReference type="KEGG" id="cel:CELE_F55B12.5"/>
<dbReference type="UCSC" id="F55B12.5.1">
    <property type="organism name" value="c. elegans"/>
</dbReference>
<dbReference type="AGR" id="WB:WBGene00003812"/>
<dbReference type="CTD" id="179879"/>
<dbReference type="WormBase" id="F55B12.5">
    <property type="protein sequence ID" value="CE32438"/>
    <property type="gene ID" value="WBGene00003812"/>
    <property type="gene designation" value="nrf-5"/>
</dbReference>
<dbReference type="eggNOG" id="KOG4160">
    <property type="taxonomic scope" value="Eukaryota"/>
</dbReference>
<dbReference type="GeneTree" id="ENSGT01100000263546"/>
<dbReference type="HOGENOM" id="CLU_017101_0_0_1"/>
<dbReference type="InParanoid" id="Q93796"/>
<dbReference type="OMA" id="CELQFIA"/>
<dbReference type="OrthoDB" id="5776980at2759"/>
<dbReference type="Reactome" id="R-CEL-166016">
    <property type="pathway name" value="Toll Like Receptor 4 (TLR4) Cascade"/>
</dbReference>
<dbReference type="Reactome" id="R-CEL-5686938">
    <property type="pathway name" value="Regulation of TLR by endogenous ligand"/>
</dbReference>
<dbReference type="PRO" id="PR:Q93796"/>
<dbReference type="Proteomes" id="UP000001940">
    <property type="component" value="Chromosome V"/>
</dbReference>
<dbReference type="Bgee" id="WBGene00003812">
    <property type="expression patterns" value="Expressed in larva and 3 other cell types or tissues"/>
</dbReference>
<dbReference type="GO" id="GO:0005576">
    <property type="term" value="C:extracellular region"/>
    <property type="evidence" value="ECO:0000314"/>
    <property type="project" value="WormBase"/>
</dbReference>
<dbReference type="GO" id="GO:0005615">
    <property type="term" value="C:extracellular space"/>
    <property type="evidence" value="ECO:0000318"/>
    <property type="project" value="GO_Central"/>
</dbReference>
<dbReference type="GO" id="GO:0001786">
    <property type="term" value="F:phosphatidylserine binding"/>
    <property type="evidence" value="ECO:0000314"/>
    <property type="project" value="WormBase"/>
</dbReference>
<dbReference type="GO" id="GO:0006869">
    <property type="term" value="P:lipid transport"/>
    <property type="evidence" value="ECO:0000314"/>
    <property type="project" value="WormBase"/>
</dbReference>
<dbReference type="GO" id="GO:1901076">
    <property type="term" value="P:positive regulation of engulfment of apoptotic cell"/>
    <property type="evidence" value="ECO:0000315"/>
    <property type="project" value="WormBase"/>
</dbReference>
<dbReference type="FunFam" id="3.15.20.10:FF:000009">
    <property type="entry name" value="Nose resistant to fluoxetine protein 5"/>
    <property type="match status" value="1"/>
</dbReference>
<dbReference type="Gene3D" id="3.15.10.10">
    <property type="entry name" value="Bactericidal permeability-increasing protein, domain 1"/>
    <property type="match status" value="1"/>
</dbReference>
<dbReference type="Gene3D" id="3.15.20.10">
    <property type="entry name" value="Bactericidal permeability-increasing protein, domain 2"/>
    <property type="match status" value="1"/>
</dbReference>
<dbReference type="InterPro" id="IPR017943">
    <property type="entry name" value="Bactericidal_perm-incr_a/b_dom"/>
</dbReference>
<dbReference type="InterPro" id="IPR032942">
    <property type="entry name" value="BPI/LBP/Plunc"/>
</dbReference>
<dbReference type="InterPro" id="IPR001124">
    <property type="entry name" value="Lipid-bd_serum_glycop_C"/>
</dbReference>
<dbReference type="InterPro" id="IPR017942">
    <property type="entry name" value="Lipid-bd_serum_glycop_N"/>
</dbReference>
<dbReference type="PANTHER" id="PTHR10504">
    <property type="entry name" value="BACTERICIDAL PERMEABILITY-INCREASING BPI PROTEIN-RELATED"/>
    <property type="match status" value="1"/>
</dbReference>
<dbReference type="PANTHER" id="PTHR10504:SF136">
    <property type="entry name" value="NOSE RESISTANT TO FLUOXETINE PROTEIN 5"/>
    <property type="match status" value="1"/>
</dbReference>
<dbReference type="Pfam" id="PF01273">
    <property type="entry name" value="LBP_BPI_CETP"/>
    <property type="match status" value="1"/>
</dbReference>
<dbReference type="Pfam" id="PF02886">
    <property type="entry name" value="LBP_BPI_CETP_C"/>
    <property type="match status" value="1"/>
</dbReference>
<dbReference type="SMART" id="SM00328">
    <property type="entry name" value="BPI1"/>
    <property type="match status" value="1"/>
</dbReference>
<dbReference type="SMART" id="SM00329">
    <property type="entry name" value="BPI2"/>
    <property type="match status" value="1"/>
</dbReference>
<dbReference type="SUPFAM" id="SSF55394">
    <property type="entry name" value="Bactericidal permeability-increasing protein, BPI"/>
    <property type="match status" value="2"/>
</dbReference>
<evidence type="ECO:0000250" key="1"/>
<evidence type="ECO:0000255" key="2"/>
<evidence type="ECO:0000256" key="3">
    <source>
        <dbReference type="SAM" id="MobiDB-lite"/>
    </source>
</evidence>
<evidence type="ECO:0000269" key="4">
    <source>
    </source>
</evidence>
<evidence type="ECO:0000269" key="5">
    <source>
    </source>
</evidence>
<evidence type="ECO:0000269" key="6">
    <source>
    </source>
</evidence>
<evidence type="ECO:0000269" key="7">
    <source>
    </source>
</evidence>
<evidence type="ECO:0000303" key="8">
    <source>
    </source>
</evidence>
<evidence type="ECO:0000305" key="9"/>
<evidence type="ECO:0000312" key="10">
    <source>
        <dbReference type="EMBL" id="AAS18682.1"/>
    </source>
</evidence>
<evidence type="ECO:0000312" key="11">
    <source>
        <dbReference type="EMBL" id="CAB02126.2"/>
    </source>
</evidence>
<evidence type="ECO:0000312" key="12">
    <source>
        <dbReference type="WormBase" id="F55B12.5"/>
    </source>
</evidence>
<sequence>MSRNFHIFFLLVSIIQVGNSADSSEITHKPAGIYVRLNQKAVDYVADLASDALPAILNNLSPPDIVTDMAKITKLHISNVAKPNLSAKFIDGKGVAYNISLASFRASAYAEISVFVWSYEGDFTAELRELSIESELHFDYNGTTTVNASVCNVTHSELSLVFPPGSSLSALQSEIKGQIVSALRDAVCTTAVEALTFVMAQKPIPPESPNYQKPEAGDPNGFSVAELGASLCQVDTVNGFEDSEQEEGNVETTVAPTPDDDNSTLTTEETQKSYWGVDLSVNHPPTFTDEDMIIGLDGGILFNGWKADSAQQLQILNKTRLDKKMVGILLSEYIPNTLFHHIYMYDLGNFKHRYTPSSLPKILQKLSKAVCSKCYVEVSANLTEQPILQIDAHLGARVQLSGNVSIMFHGREQLHDVLHANTKLHVTLKPTVRHSRIFGDVSLTNVDVNVFDLGLGGPLAAPIEKLFSFVVPRVLWPQVKKRLRFAMNRRGVKLPIFCGVELEHTELDFVDHAVLLNTDFSFDLPLFLAKFKKYLDAKSKINPNLPKYVII</sequence>
<name>NRF5_CAEEL</name>